<evidence type="ECO:0000250" key="1">
    <source>
        <dbReference type="UniProtKB" id="P04040"/>
    </source>
</evidence>
<evidence type="ECO:0000250" key="2">
    <source>
        <dbReference type="UniProtKB" id="P24270"/>
    </source>
</evidence>
<evidence type="ECO:0000255" key="3">
    <source>
        <dbReference type="PROSITE-ProRule" id="PRU10013"/>
    </source>
</evidence>
<evidence type="ECO:0000305" key="4"/>
<accession>Q5RF10</accession>
<feature type="initiator methionine" description="Removed" evidence="1">
    <location>
        <position position="1"/>
    </location>
</feature>
<feature type="chain" id="PRO_0000084904" description="Catalase">
    <location>
        <begin position="2"/>
        <end position="527"/>
    </location>
</feature>
<feature type="short sequence motif" description="Microbody targeting signal; atypical" evidence="1">
    <location>
        <begin position="524"/>
        <end position="527"/>
    </location>
</feature>
<feature type="active site" evidence="3">
    <location>
        <position position="75"/>
    </location>
</feature>
<feature type="active site" evidence="3">
    <location>
        <position position="148"/>
    </location>
</feature>
<feature type="binding site" evidence="1">
    <location>
        <position position="194"/>
    </location>
    <ligand>
        <name>NADP(+)</name>
        <dbReference type="ChEBI" id="CHEBI:58349"/>
    </ligand>
</feature>
<feature type="binding site" evidence="1">
    <location>
        <position position="201"/>
    </location>
    <ligand>
        <name>NADP(+)</name>
        <dbReference type="ChEBI" id="CHEBI:58349"/>
    </ligand>
</feature>
<feature type="binding site" evidence="1">
    <location>
        <position position="203"/>
    </location>
    <ligand>
        <name>NADP(+)</name>
        <dbReference type="ChEBI" id="CHEBI:58349"/>
    </ligand>
</feature>
<feature type="binding site" evidence="1">
    <location>
        <position position="213"/>
    </location>
    <ligand>
        <name>NADP(+)</name>
        <dbReference type="ChEBI" id="CHEBI:58349"/>
    </ligand>
</feature>
<feature type="binding site" evidence="1">
    <location>
        <position position="237"/>
    </location>
    <ligand>
        <name>NADP(+)</name>
        <dbReference type="ChEBI" id="CHEBI:58349"/>
    </ligand>
</feature>
<feature type="binding site" evidence="1">
    <location>
        <position position="303"/>
    </location>
    <ligand>
        <name>NADP(+)</name>
        <dbReference type="ChEBI" id="CHEBI:58349"/>
    </ligand>
</feature>
<feature type="binding site" evidence="1">
    <location>
        <position position="305"/>
    </location>
    <ligand>
        <name>NADP(+)</name>
        <dbReference type="ChEBI" id="CHEBI:58349"/>
    </ligand>
</feature>
<feature type="binding site" evidence="1">
    <location>
        <position position="306"/>
    </location>
    <ligand>
        <name>NADP(+)</name>
        <dbReference type="ChEBI" id="CHEBI:58349"/>
    </ligand>
</feature>
<feature type="binding site" description="axial binding residue" evidence="1">
    <location>
        <position position="358"/>
    </location>
    <ligand>
        <name>heme</name>
        <dbReference type="ChEBI" id="CHEBI:30413"/>
    </ligand>
    <ligandPart>
        <name>Fe</name>
        <dbReference type="ChEBI" id="CHEBI:18248"/>
    </ligandPart>
</feature>
<feature type="modified residue" description="N-acetylalanine" evidence="1">
    <location>
        <position position="2"/>
    </location>
</feature>
<feature type="modified residue" description="Phosphoserine" evidence="1">
    <location>
        <position position="9"/>
    </location>
</feature>
<feature type="modified residue" description="N6-succinyllysine" evidence="2">
    <location>
        <position position="13"/>
    </location>
</feature>
<feature type="modified residue" description="N6-succinyllysine" evidence="2">
    <location>
        <position position="221"/>
    </location>
</feature>
<feature type="modified residue" description="N6-acetyllysine" evidence="2">
    <location>
        <position position="233"/>
    </location>
</feature>
<feature type="modified residue" description="N6-acetyllysine; alternate" evidence="2">
    <location>
        <position position="306"/>
    </location>
</feature>
<feature type="modified residue" description="N6-succinyllysine; alternate" evidence="2">
    <location>
        <position position="306"/>
    </location>
</feature>
<feature type="modified residue" description="Phosphoserine" evidence="2">
    <location>
        <position position="417"/>
    </location>
</feature>
<feature type="modified residue" description="Phosphoserine" evidence="1">
    <location>
        <position position="422"/>
    </location>
</feature>
<feature type="modified residue" description="N6-acetyllysine; alternate" evidence="2">
    <location>
        <position position="480"/>
    </location>
</feature>
<feature type="modified residue" description="N6-succinyllysine; alternate" evidence="2">
    <location>
        <position position="480"/>
    </location>
</feature>
<feature type="modified residue" description="N6-acetyllysine" evidence="2">
    <location>
        <position position="499"/>
    </location>
</feature>
<feature type="modified residue" description="Phosphothreonine" evidence="1">
    <location>
        <position position="511"/>
    </location>
</feature>
<feature type="modified residue" description="Phosphoserine" evidence="1">
    <location>
        <position position="515"/>
    </location>
</feature>
<feature type="modified residue" description="Phosphoserine" evidence="1">
    <location>
        <position position="517"/>
    </location>
</feature>
<organism>
    <name type="scientific">Pongo abelii</name>
    <name type="common">Sumatran orangutan</name>
    <name type="synonym">Pongo pygmaeus abelii</name>
    <dbReference type="NCBI Taxonomy" id="9601"/>
    <lineage>
        <taxon>Eukaryota</taxon>
        <taxon>Metazoa</taxon>
        <taxon>Chordata</taxon>
        <taxon>Craniata</taxon>
        <taxon>Vertebrata</taxon>
        <taxon>Euteleostomi</taxon>
        <taxon>Mammalia</taxon>
        <taxon>Eutheria</taxon>
        <taxon>Euarchontoglires</taxon>
        <taxon>Primates</taxon>
        <taxon>Haplorrhini</taxon>
        <taxon>Catarrhini</taxon>
        <taxon>Hominidae</taxon>
        <taxon>Pongo</taxon>
    </lineage>
</organism>
<keyword id="KW-0007">Acetylation</keyword>
<keyword id="KW-0349">Heme</keyword>
<keyword id="KW-0376">Hydrogen peroxide</keyword>
<keyword id="KW-0408">Iron</keyword>
<keyword id="KW-0479">Metal-binding</keyword>
<keyword id="KW-0497">Mitogen</keyword>
<keyword id="KW-0521">NADP</keyword>
<keyword id="KW-0560">Oxidoreductase</keyword>
<keyword id="KW-0575">Peroxidase</keyword>
<keyword id="KW-0576">Peroxisome</keyword>
<keyword id="KW-0597">Phosphoprotein</keyword>
<keyword id="KW-1185">Reference proteome</keyword>
<dbReference type="EC" id="1.11.1.6" evidence="3"/>
<dbReference type="EMBL" id="CR857351">
    <property type="protein sequence ID" value="CAH89647.1"/>
    <property type="molecule type" value="mRNA"/>
</dbReference>
<dbReference type="RefSeq" id="NP_001124739.1">
    <property type="nucleotide sequence ID" value="NM_001131267.2"/>
</dbReference>
<dbReference type="SMR" id="Q5RF10"/>
<dbReference type="FunCoup" id="Q5RF10">
    <property type="interactions" value="1040"/>
</dbReference>
<dbReference type="STRING" id="9601.ENSPPYP00000024526"/>
<dbReference type="PeroxiBase" id="6421">
    <property type="entry name" value="PabeKat01"/>
</dbReference>
<dbReference type="Ensembl" id="ENSPPYT00000033790.2">
    <property type="protein sequence ID" value="ENSPPYP00000024526.1"/>
    <property type="gene ID" value="ENSPPYG00000003364.3"/>
</dbReference>
<dbReference type="GeneID" id="100171588"/>
<dbReference type="KEGG" id="pon:100171588"/>
<dbReference type="CTD" id="847"/>
<dbReference type="eggNOG" id="KOG0047">
    <property type="taxonomic scope" value="Eukaryota"/>
</dbReference>
<dbReference type="GeneTree" id="ENSGT00390000018100"/>
<dbReference type="HOGENOM" id="CLU_010645_2_0_1"/>
<dbReference type="InParanoid" id="Q5RF10"/>
<dbReference type="OMA" id="KFRWNVF"/>
<dbReference type="OrthoDB" id="6880011at2759"/>
<dbReference type="TreeFam" id="TF300540"/>
<dbReference type="Proteomes" id="UP000001595">
    <property type="component" value="Chromosome 11"/>
</dbReference>
<dbReference type="GO" id="GO:0062151">
    <property type="term" value="C:catalase complex"/>
    <property type="evidence" value="ECO:0007669"/>
    <property type="project" value="Ensembl"/>
</dbReference>
<dbReference type="GO" id="GO:0005739">
    <property type="term" value="C:mitochondrion"/>
    <property type="evidence" value="ECO:0007669"/>
    <property type="project" value="TreeGrafter"/>
</dbReference>
<dbReference type="GO" id="GO:0005782">
    <property type="term" value="C:peroxisomal matrix"/>
    <property type="evidence" value="ECO:0007669"/>
    <property type="project" value="UniProtKB-SubCell"/>
</dbReference>
<dbReference type="GO" id="GO:0005778">
    <property type="term" value="C:peroxisomal membrane"/>
    <property type="evidence" value="ECO:0007669"/>
    <property type="project" value="Ensembl"/>
</dbReference>
<dbReference type="GO" id="GO:0004046">
    <property type="term" value="F:aminoacylase activity"/>
    <property type="evidence" value="ECO:0007669"/>
    <property type="project" value="Ensembl"/>
</dbReference>
<dbReference type="GO" id="GO:0004096">
    <property type="term" value="F:catalase activity"/>
    <property type="evidence" value="ECO:0007669"/>
    <property type="project" value="UniProtKB-EC"/>
</dbReference>
<dbReference type="GO" id="GO:0019899">
    <property type="term" value="F:enzyme binding"/>
    <property type="evidence" value="ECO:0007669"/>
    <property type="project" value="Ensembl"/>
</dbReference>
<dbReference type="GO" id="GO:0020037">
    <property type="term" value="F:heme binding"/>
    <property type="evidence" value="ECO:0007669"/>
    <property type="project" value="Ensembl"/>
</dbReference>
<dbReference type="GO" id="GO:0046872">
    <property type="term" value="F:metal ion binding"/>
    <property type="evidence" value="ECO:0007669"/>
    <property type="project" value="UniProtKB-KW"/>
</dbReference>
<dbReference type="GO" id="GO:0050661">
    <property type="term" value="F:NADP binding"/>
    <property type="evidence" value="ECO:0007669"/>
    <property type="project" value="Ensembl"/>
</dbReference>
<dbReference type="GO" id="GO:0042803">
    <property type="term" value="F:protein homodimerization activity"/>
    <property type="evidence" value="ECO:0007669"/>
    <property type="project" value="Ensembl"/>
</dbReference>
<dbReference type="GO" id="GO:0009060">
    <property type="term" value="P:aerobic respiration"/>
    <property type="evidence" value="ECO:0007669"/>
    <property type="project" value="Ensembl"/>
</dbReference>
<dbReference type="GO" id="GO:0061692">
    <property type="term" value="P:cellular detoxification of hydrogen peroxide"/>
    <property type="evidence" value="ECO:0007669"/>
    <property type="project" value="Ensembl"/>
</dbReference>
<dbReference type="GO" id="GO:0008203">
    <property type="term" value="P:cholesterol metabolic process"/>
    <property type="evidence" value="ECO:0007669"/>
    <property type="project" value="Ensembl"/>
</dbReference>
<dbReference type="GO" id="GO:0020027">
    <property type="term" value="P:hemoglobin metabolic process"/>
    <property type="evidence" value="ECO:0007669"/>
    <property type="project" value="Ensembl"/>
</dbReference>
<dbReference type="GO" id="GO:0042744">
    <property type="term" value="P:hydrogen peroxide catabolic process"/>
    <property type="evidence" value="ECO:0007669"/>
    <property type="project" value="UniProtKB-KW"/>
</dbReference>
<dbReference type="GO" id="GO:0043066">
    <property type="term" value="P:negative regulation of apoptotic process"/>
    <property type="evidence" value="ECO:0007669"/>
    <property type="project" value="Ensembl"/>
</dbReference>
<dbReference type="GO" id="GO:0051781">
    <property type="term" value="P:positive regulation of cell division"/>
    <property type="evidence" value="ECO:0007669"/>
    <property type="project" value="UniProtKB-KW"/>
</dbReference>
<dbReference type="GO" id="GO:0051897">
    <property type="term" value="P:positive regulation of phosphatidylinositol 3-kinase/protein kinase B signal transduction"/>
    <property type="evidence" value="ECO:0007669"/>
    <property type="project" value="Ensembl"/>
</dbReference>
<dbReference type="GO" id="GO:0006641">
    <property type="term" value="P:triglyceride metabolic process"/>
    <property type="evidence" value="ECO:0007669"/>
    <property type="project" value="Ensembl"/>
</dbReference>
<dbReference type="GO" id="GO:0009650">
    <property type="term" value="P:UV protection"/>
    <property type="evidence" value="ECO:0007669"/>
    <property type="project" value="Ensembl"/>
</dbReference>
<dbReference type="CDD" id="cd08156">
    <property type="entry name" value="catalase_clade_3"/>
    <property type="match status" value="1"/>
</dbReference>
<dbReference type="FunFam" id="2.40.180.10:FF:000001">
    <property type="entry name" value="Catalase"/>
    <property type="match status" value="1"/>
</dbReference>
<dbReference type="Gene3D" id="2.40.180.10">
    <property type="entry name" value="Catalase core domain"/>
    <property type="match status" value="1"/>
</dbReference>
<dbReference type="InterPro" id="IPR018028">
    <property type="entry name" value="Catalase"/>
</dbReference>
<dbReference type="InterPro" id="IPR040333">
    <property type="entry name" value="Catalase_3"/>
</dbReference>
<dbReference type="InterPro" id="IPR024708">
    <property type="entry name" value="Catalase_AS"/>
</dbReference>
<dbReference type="InterPro" id="IPR024711">
    <property type="entry name" value="Catalase_clade1/3"/>
</dbReference>
<dbReference type="InterPro" id="IPR011614">
    <property type="entry name" value="Catalase_core"/>
</dbReference>
<dbReference type="InterPro" id="IPR002226">
    <property type="entry name" value="Catalase_haem_BS"/>
</dbReference>
<dbReference type="InterPro" id="IPR010582">
    <property type="entry name" value="Catalase_immune_responsive"/>
</dbReference>
<dbReference type="InterPro" id="IPR020835">
    <property type="entry name" value="Catalase_sf"/>
</dbReference>
<dbReference type="PANTHER" id="PTHR11465">
    <property type="entry name" value="CATALASE"/>
    <property type="match status" value="1"/>
</dbReference>
<dbReference type="PANTHER" id="PTHR11465:SF9">
    <property type="entry name" value="CATALASE"/>
    <property type="match status" value="1"/>
</dbReference>
<dbReference type="Pfam" id="PF00199">
    <property type="entry name" value="Catalase"/>
    <property type="match status" value="1"/>
</dbReference>
<dbReference type="Pfam" id="PF06628">
    <property type="entry name" value="Catalase-rel"/>
    <property type="match status" value="1"/>
</dbReference>
<dbReference type="PIRSF" id="PIRSF038928">
    <property type="entry name" value="Catalase_clade1-3"/>
    <property type="match status" value="1"/>
</dbReference>
<dbReference type="PRINTS" id="PR00067">
    <property type="entry name" value="CATALASE"/>
</dbReference>
<dbReference type="SMART" id="SM01060">
    <property type="entry name" value="Catalase"/>
    <property type="match status" value="1"/>
</dbReference>
<dbReference type="SUPFAM" id="SSF56634">
    <property type="entry name" value="Heme-dependent catalase-like"/>
    <property type="match status" value="1"/>
</dbReference>
<dbReference type="PROSITE" id="PS00437">
    <property type="entry name" value="CATALASE_1"/>
    <property type="match status" value="1"/>
</dbReference>
<dbReference type="PROSITE" id="PS00438">
    <property type="entry name" value="CATALASE_2"/>
    <property type="match status" value="1"/>
</dbReference>
<dbReference type="PROSITE" id="PS51402">
    <property type="entry name" value="CATALASE_3"/>
    <property type="match status" value="1"/>
</dbReference>
<comment type="function">
    <text evidence="1">Catalyzes the degradation of hydrogen peroxide (H(2)O(2)) generated by peroxisomal oxidases to water and oxygen, thereby protecting cells from the toxic effects of hydrogen peroxide. Promotes growth of cells including T-cells, B-cells, myeloid leukemia cells, melanoma cells, mastocytoma cells and normal and transformed fibroblast cells.</text>
</comment>
<comment type="catalytic activity">
    <reaction evidence="3">
        <text>2 H2O2 = O2 + 2 H2O</text>
        <dbReference type="Rhea" id="RHEA:20309"/>
        <dbReference type="ChEBI" id="CHEBI:15377"/>
        <dbReference type="ChEBI" id="CHEBI:15379"/>
        <dbReference type="ChEBI" id="CHEBI:16240"/>
        <dbReference type="EC" id="1.11.1.6"/>
    </reaction>
</comment>
<comment type="cofactor">
    <cofactor evidence="1">
        <name>heme</name>
        <dbReference type="ChEBI" id="CHEBI:30413"/>
    </cofactor>
</comment>
<comment type="cofactor">
    <cofactor evidence="1">
        <name>NADP(+)</name>
        <dbReference type="ChEBI" id="CHEBI:58349"/>
    </cofactor>
</comment>
<comment type="subunit">
    <text evidence="1">Homotetramer. Interacts (via microbody targeting signal) with PEX5, monomeric form interacts with PEX5, leading to its translocation into peroxisomes.</text>
</comment>
<comment type="subcellular location">
    <subcellularLocation>
        <location evidence="1">Peroxisome matrix</location>
    </subcellularLocation>
</comment>
<comment type="similarity">
    <text evidence="4">Belongs to the catalase family.</text>
</comment>
<proteinExistence type="evidence at transcript level"/>
<gene>
    <name type="primary">CAT</name>
</gene>
<protein>
    <recommendedName>
        <fullName>Catalase</fullName>
        <ecNumber evidence="3">1.11.1.6</ecNumber>
    </recommendedName>
</protein>
<name>CATA_PONAB</name>
<reference key="1">
    <citation type="submission" date="2004-11" db="EMBL/GenBank/DDBJ databases">
        <authorList>
            <consortium name="The German cDNA consortium"/>
        </authorList>
    </citation>
    <scope>NUCLEOTIDE SEQUENCE [LARGE SCALE MRNA]</scope>
    <source>
        <tissue>Kidney</tissue>
    </source>
</reference>
<sequence>MADSRDPASDQMKHWKEQRAAQKADVLTTGAGNPVGDKLNVITVGPRGPLLVQDVVFTDEMAHFDRERIPERVVHAKGAGAFGYFEVTHDITKYSKAKVFEHIGKKTPIAVRFSTVAGESGSADTVRDPRGFAVKFYTEDGNWDLVGNNTPIFFIRDPLLFPSFIHSQKRNPQTHLKDPDMVWDFWSLRPESLHQVSFLFSDRGIPDGHRHMNGYGSHTFKLVNANGEAVYCKFHYKTDQGIKNLSVEDAARLSQEDPDYGIRDLFNAIATEKYPSWTFYIQVMTFNQAETFPFNPFDLTKVWPHKDYPLIPVGKLVLNRNPVNYFAEVEQIAFDPSNMPPGIEASPDKMLQGRLFAYPDTHRHRLGPNYLHIPVNCPYRARVANYQRDGPMCMQDNQGGAPNYYPNSFGAPEQQPSALEHSTQCSGEVQRFNTASDDNVTQVRAFYVNVLNEEQRKRLCENIAGHLKDAQIFIQKKAVKNFTEVHPDYGSRIQALLDKYNAEKPKNAIHTFVQSGSHLAAREKANL</sequence>